<gene>
    <name type="primary">dpaL</name>
    <name type="ordered locus">STM1002</name>
</gene>
<proteinExistence type="evidence at protein level"/>
<accession>P40817</accession>
<organism>
    <name type="scientific">Salmonella typhimurium (strain LT2 / SGSC1412 / ATCC 700720)</name>
    <dbReference type="NCBI Taxonomy" id="99287"/>
    <lineage>
        <taxon>Bacteria</taxon>
        <taxon>Pseudomonadati</taxon>
        <taxon>Pseudomonadota</taxon>
        <taxon>Gammaproteobacteria</taxon>
        <taxon>Enterobacterales</taxon>
        <taxon>Enterobacteriaceae</taxon>
        <taxon>Salmonella</taxon>
    </lineage>
</organism>
<name>DPAL_SALTY</name>
<sequence length="404" mass="44152">MHELIKYQFNTRRKKYGTGAALSLLNGNVGHEVLAFHKKLPNYAVTPLHNLAHLSQRLGLGSIHIKDESWRFGLNAFKGLGGSYAVGKYLADKLQCDINSLSFAALNTPEIKEKIKDCVFVTATDGNHGRGVAWAAEQLGLKAVVYMPKGSSLIRAENIRHHGAECTITDLNYDDAVRLAHRMAQTKGWVLLQDTAWTGYEEIPTWIMQGYMTLAVEAYEQLAETNSPLPTHLILQAGVGSFAGSVMGYFVEKMQENIPNIIVVEPHQANCLYQSAVMDDGQPHCVTGDMATIMAGLACGEPNIISWPIIRDNTSCFISADDCLAAKGMRISAAPRPGTDTPFISGESGAIGVGLLYELMNNMHYQDLANRLQLDASAHVLLISTEGDTSPDIYEDIVWNGRSA</sequence>
<evidence type="ECO:0000255" key="1"/>
<evidence type="ECO:0000269" key="2">
    <source>
    </source>
</evidence>
<evidence type="ECO:0000269" key="3">
    <source>
    </source>
</evidence>
<evidence type="ECO:0000269" key="4">
    <source>
    </source>
</evidence>
<evidence type="ECO:0000305" key="5"/>
<evidence type="ECO:0007829" key="6">
    <source>
        <dbReference type="PDB" id="5YGR"/>
    </source>
</evidence>
<protein>
    <recommendedName>
        <fullName>Diaminopropionate ammonia-lyase</fullName>
        <shortName>DAPAL</shortName>
        <ecNumber evidence="4">4.3.1.15</ecNumber>
    </recommendedName>
    <alternativeName>
        <fullName>2,3-diaminopropionate ammonia-lyase</fullName>
    </alternativeName>
    <alternativeName>
        <fullName>Alpha,beta-diaminopropionate ammonia-lyase</fullName>
    </alternativeName>
    <alternativeName>
        <fullName>Diaminopropionatase</fullName>
    </alternativeName>
</protein>
<comment type="function">
    <text evidence="2 3 4">Catalyzes the alpha,beta-elimination reaction of both L- and D-alpha,beta-diaminopropionate (DAP) to form pyruvate and ammonia. In vitro L- and D-isomers of serine are also degraded, though slowly; it is the only serine dehydratase which can eliminate an amino group at the beta-carbon position. In vivo L-, D- and a mixure of DL-DAP allow growth. DL-DAP is toxic in the absence of this enzyme, it may inhibit enzymes involved in the synthesis of pyruvate and aspartate, as well as amino acids derived from them.</text>
</comment>
<comment type="catalytic activity">
    <reaction evidence="4">
        <text>(S)-2,3-diaminopropanoate + H2O + H(+) = pyruvate + 2 NH4(+)</text>
        <dbReference type="Rhea" id="RHEA:22084"/>
        <dbReference type="ChEBI" id="CHEBI:15361"/>
        <dbReference type="ChEBI" id="CHEBI:15377"/>
        <dbReference type="ChEBI" id="CHEBI:15378"/>
        <dbReference type="ChEBI" id="CHEBI:28938"/>
        <dbReference type="ChEBI" id="CHEBI:57721"/>
        <dbReference type="EC" id="4.3.1.15"/>
    </reaction>
</comment>
<comment type="catalytic activity">
    <reaction evidence="4">
        <text>(R)-2,3-diaminopropanoate + H2O + H(+) = pyruvate + 2 NH4(+)</text>
        <dbReference type="Rhea" id="RHEA:52432"/>
        <dbReference type="ChEBI" id="CHEBI:15361"/>
        <dbReference type="ChEBI" id="CHEBI:15377"/>
        <dbReference type="ChEBI" id="CHEBI:15378"/>
        <dbReference type="ChEBI" id="CHEBI:28938"/>
        <dbReference type="ChEBI" id="CHEBI:136599"/>
        <dbReference type="EC" id="4.3.1.15"/>
    </reaction>
</comment>
<comment type="cofactor">
    <cofactor evidence="2 4">
        <name>pyridoxal 5'-phosphate</name>
        <dbReference type="ChEBI" id="CHEBI:597326"/>
    </cofactor>
    <text evidence="2 4">Binds 1 pyridoxal phosphate per subunit.</text>
</comment>
<comment type="activity regulation">
    <text>Competitively inhibited by L- and D-alanine.</text>
</comment>
<comment type="biophysicochemical properties">
    <kinetics>
        <Vmax evidence="4">852.0 umol/min/mg enzyme for L-DAP</Vmax>
        <Vmax evidence="4">447.0 umol/min/mg enzyme for D-DAP</Vmax>
    </kinetics>
    <phDependence>
        <text evidence="4">Optimum pH is 8.0.</text>
    </phDependence>
</comment>
<comment type="subunit">
    <text evidence="2 4">Homodimer.</text>
</comment>
<comment type="induction">
    <text evidence="3">By DL-DAP (at protein level).</text>
</comment>
<comment type="disruption phenotype">
    <text evidence="3">No growth on minimal medium plus DL-DAP; growth can be restored by a mix of 8 amino acids (Arg, Asn, Cys, Glu, Ile, Leu, Met and Thr).</text>
</comment>
<comment type="similarity">
    <text evidence="5">Belongs to the diaminopropionate ammonia-lyase family.</text>
</comment>
<keyword id="KW-0002">3D-structure</keyword>
<keyword id="KW-0903">Direct protein sequencing</keyword>
<keyword id="KW-0456">Lyase</keyword>
<keyword id="KW-0663">Pyridoxal phosphate</keyword>
<keyword id="KW-1185">Reference proteome</keyword>
<feature type="chain" id="PRO_0000185593" description="Diaminopropionate ammonia-lyase">
    <location>
        <begin position="1"/>
        <end position="404"/>
    </location>
</feature>
<feature type="modified residue" description="N6-(pyridoxal phosphate)lysine" evidence="1">
    <location>
        <position position="78"/>
    </location>
</feature>
<feature type="sequence conflict" description="In Ref. 2; AA sequence." evidence="5" ref="2">
    <original>Y</original>
    <variation>K</variation>
    <location>
        <position position="16"/>
    </location>
</feature>
<feature type="sequence conflict" description="In Ref. 2; AA sequence." evidence="5" ref="2">
    <original>E</original>
    <variation>G</variation>
    <location>
        <position position="68"/>
    </location>
</feature>
<feature type="sequence conflict" description="In Ref. 2; AA sequence." evidence="5" ref="2">
    <original>F</original>
    <variation>A</variation>
    <location>
        <position position="242"/>
    </location>
</feature>
<feature type="strand" evidence="6">
    <location>
        <begin position="9"/>
        <end position="13"/>
    </location>
</feature>
<feature type="helix" evidence="6">
    <location>
        <begin position="27"/>
        <end position="39"/>
    </location>
</feature>
<feature type="strand" evidence="6">
    <location>
        <begin position="48"/>
        <end position="50"/>
    </location>
</feature>
<feature type="helix" evidence="6">
    <location>
        <begin position="52"/>
        <end position="58"/>
    </location>
</feature>
<feature type="strand" evidence="6">
    <location>
        <begin position="61"/>
        <end position="67"/>
    </location>
</feature>
<feature type="helix" evidence="6">
    <location>
        <begin position="68"/>
        <end position="73"/>
    </location>
</feature>
<feature type="helix" evidence="6">
    <location>
        <begin position="80"/>
        <end position="93"/>
    </location>
</feature>
<feature type="helix" evidence="6">
    <location>
        <begin position="105"/>
        <end position="107"/>
    </location>
</feature>
<feature type="helix" evidence="6">
    <location>
        <begin position="109"/>
        <end position="112"/>
    </location>
</feature>
<feature type="helix" evidence="6">
    <location>
        <begin position="113"/>
        <end position="115"/>
    </location>
</feature>
<feature type="strand" evidence="6">
    <location>
        <begin position="119"/>
        <end position="123"/>
    </location>
</feature>
<feature type="helix" evidence="6">
    <location>
        <begin position="127"/>
        <end position="138"/>
    </location>
</feature>
<feature type="strand" evidence="6">
    <location>
        <begin position="142"/>
        <end position="147"/>
    </location>
</feature>
<feature type="helix" evidence="6">
    <location>
        <begin position="154"/>
        <end position="160"/>
    </location>
</feature>
<feature type="turn" evidence="6">
    <location>
        <begin position="161"/>
        <end position="163"/>
    </location>
</feature>
<feature type="strand" evidence="6">
    <location>
        <begin position="165"/>
        <end position="168"/>
    </location>
</feature>
<feature type="helix" evidence="6">
    <location>
        <begin position="173"/>
        <end position="187"/>
    </location>
</feature>
<feature type="helix" evidence="6">
    <location>
        <begin position="202"/>
        <end position="223"/>
    </location>
</feature>
<feature type="turn" evidence="6">
    <location>
        <begin position="224"/>
        <end position="226"/>
    </location>
</feature>
<feature type="strand" evidence="6">
    <location>
        <begin position="231"/>
        <end position="236"/>
    </location>
</feature>
<feature type="strand" evidence="6">
    <location>
        <begin position="238"/>
        <end position="240"/>
    </location>
</feature>
<feature type="helix" evidence="6">
    <location>
        <begin position="241"/>
        <end position="253"/>
    </location>
</feature>
<feature type="helix" evidence="6">
    <location>
        <begin position="255"/>
        <end position="257"/>
    </location>
</feature>
<feature type="strand" evidence="6">
    <location>
        <begin position="260"/>
        <end position="266"/>
    </location>
</feature>
<feature type="helix" evidence="6">
    <location>
        <begin position="267"/>
        <end position="269"/>
    </location>
</feature>
<feature type="helix" evidence="6">
    <location>
        <begin position="271"/>
        <end position="278"/>
    </location>
</feature>
<feature type="strand" evidence="6">
    <location>
        <begin position="280"/>
        <end position="282"/>
    </location>
</feature>
<feature type="helix" evidence="6">
    <location>
        <begin position="295"/>
        <end position="297"/>
    </location>
</feature>
<feature type="turn" evidence="6">
    <location>
        <begin position="304"/>
        <end position="306"/>
    </location>
</feature>
<feature type="helix" evidence="6">
    <location>
        <begin position="307"/>
        <end position="313"/>
    </location>
</feature>
<feature type="strand" evidence="6">
    <location>
        <begin position="315"/>
        <end position="320"/>
    </location>
</feature>
<feature type="helix" evidence="6">
    <location>
        <begin position="322"/>
        <end position="333"/>
    </location>
</feature>
<feature type="turn" evidence="6">
    <location>
        <begin position="347"/>
        <end position="349"/>
    </location>
</feature>
<feature type="helix" evidence="6">
    <location>
        <begin position="351"/>
        <end position="361"/>
    </location>
</feature>
<feature type="helix" evidence="6">
    <location>
        <begin position="363"/>
        <end position="365"/>
    </location>
</feature>
<feature type="helix" evidence="6">
    <location>
        <begin position="366"/>
        <end position="371"/>
    </location>
</feature>
<feature type="strand" evidence="6">
    <location>
        <begin position="379"/>
        <end position="384"/>
    </location>
</feature>
<feature type="helix" evidence="6">
    <location>
        <begin position="391"/>
        <end position="398"/>
    </location>
</feature>
<dbReference type="EC" id="4.3.1.15" evidence="4"/>
<dbReference type="EMBL" id="AE006468">
    <property type="protein sequence ID" value="AAL19936.1"/>
    <property type="molecule type" value="Genomic_DNA"/>
</dbReference>
<dbReference type="RefSeq" id="NP_459977.1">
    <property type="nucleotide sequence ID" value="NC_003197.2"/>
</dbReference>
<dbReference type="RefSeq" id="WP_000544849.1">
    <property type="nucleotide sequence ID" value="NC_003197.2"/>
</dbReference>
<dbReference type="PDB" id="5YGR">
    <property type="method" value="X-ray"/>
    <property type="resolution" value="2.50 A"/>
    <property type="chains" value="A/B/C/D=1-404"/>
</dbReference>
<dbReference type="PDBsum" id="5YGR"/>
<dbReference type="SMR" id="P40817"/>
<dbReference type="STRING" id="99287.STM1002"/>
<dbReference type="PaxDb" id="99287-STM1002"/>
<dbReference type="GeneID" id="1252520"/>
<dbReference type="KEGG" id="stm:STM1002"/>
<dbReference type="PATRIC" id="fig|99287.12.peg.1058"/>
<dbReference type="HOGENOM" id="CLU_021802_8_0_6"/>
<dbReference type="OMA" id="IQDTAWE"/>
<dbReference type="PhylomeDB" id="P40817"/>
<dbReference type="BioCyc" id="SENT99287:STM1002-MONOMER"/>
<dbReference type="BRENDA" id="4.3.1.15">
    <property type="organism ID" value="2169"/>
</dbReference>
<dbReference type="SABIO-RK" id="P40817"/>
<dbReference type="Proteomes" id="UP000001014">
    <property type="component" value="Chromosome"/>
</dbReference>
<dbReference type="GO" id="GO:0008838">
    <property type="term" value="F:diaminopropionate ammonia-lyase activity"/>
    <property type="evidence" value="ECO:0007669"/>
    <property type="project" value="UniProtKB-EC"/>
</dbReference>
<dbReference type="GO" id="GO:0030170">
    <property type="term" value="F:pyridoxal phosphate binding"/>
    <property type="evidence" value="ECO:0007669"/>
    <property type="project" value="InterPro"/>
</dbReference>
<dbReference type="CDD" id="cd00640">
    <property type="entry name" value="Trp-synth-beta_II"/>
    <property type="match status" value="1"/>
</dbReference>
<dbReference type="FunFam" id="3.40.50.1100:FF:000070">
    <property type="entry name" value="Diaminopropionate ammonia-lyase"/>
    <property type="match status" value="1"/>
</dbReference>
<dbReference type="FunFam" id="3.40.50.1100:FF:000071">
    <property type="entry name" value="Diaminopropionate ammonia-lyase"/>
    <property type="match status" value="1"/>
</dbReference>
<dbReference type="Gene3D" id="3.40.50.1100">
    <property type="match status" value="3"/>
</dbReference>
<dbReference type="InterPro" id="IPR010081">
    <property type="entry name" value="DiNH2opropionate_NH3_lyase"/>
</dbReference>
<dbReference type="InterPro" id="IPR019871">
    <property type="entry name" value="DiNH2propionate_NH3-lyase_sub"/>
</dbReference>
<dbReference type="InterPro" id="IPR001926">
    <property type="entry name" value="TrpB-like_PALP"/>
</dbReference>
<dbReference type="InterPro" id="IPR036052">
    <property type="entry name" value="TrpB-like_PALP_sf"/>
</dbReference>
<dbReference type="NCBIfam" id="TIGR03528">
    <property type="entry name" value="2_3_DAP_am_ly"/>
    <property type="match status" value="1"/>
</dbReference>
<dbReference type="NCBIfam" id="TIGR01747">
    <property type="entry name" value="diampropi_NH3ly"/>
    <property type="match status" value="1"/>
</dbReference>
<dbReference type="NCBIfam" id="NF006058">
    <property type="entry name" value="PRK08206.1"/>
    <property type="match status" value="1"/>
</dbReference>
<dbReference type="PANTHER" id="PTHR42937">
    <property type="match status" value="1"/>
</dbReference>
<dbReference type="PANTHER" id="PTHR42937:SF1">
    <property type="entry name" value="DIAMINOPROPIONATE AMMONIA-LYASE"/>
    <property type="match status" value="1"/>
</dbReference>
<dbReference type="Pfam" id="PF00291">
    <property type="entry name" value="PALP"/>
    <property type="match status" value="1"/>
</dbReference>
<dbReference type="SUPFAM" id="SSF53686">
    <property type="entry name" value="Tryptophan synthase beta subunit-like PLP-dependent enzymes"/>
    <property type="match status" value="1"/>
</dbReference>
<reference key="1">
    <citation type="journal article" date="2001" name="Nature">
        <title>Complete genome sequence of Salmonella enterica serovar Typhimurium LT2.</title>
        <authorList>
            <person name="McClelland M."/>
            <person name="Sanderson K.E."/>
            <person name="Spieth J."/>
            <person name="Clifton S.W."/>
            <person name="Latreille P."/>
            <person name="Courtney L."/>
            <person name="Porwollik S."/>
            <person name="Ali J."/>
            <person name="Dante M."/>
            <person name="Du F."/>
            <person name="Hou S."/>
            <person name="Layman D."/>
            <person name="Leonard S."/>
            <person name="Nguyen C."/>
            <person name="Scott K."/>
            <person name="Holmes A."/>
            <person name="Grewal N."/>
            <person name="Mulvaney E."/>
            <person name="Ryan E."/>
            <person name="Sun H."/>
            <person name="Florea L."/>
            <person name="Miller W."/>
            <person name="Stoneking T."/>
            <person name="Nhan M."/>
            <person name="Waterston R."/>
            <person name="Wilson R.K."/>
        </authorList>
    </citation>
    <scope>NUCLEOTIDE SEQUENCE [LARGE SCALE GENOMIC DNA]</scope>
    <source>
        <strain>LT2 / SGSC1412 / ATCC 700720</strain>
    </source>
</reference>
<reference key="2">
    <citation type="journal article" date="1988" name="J. Biol. Chem.">
        <title>Diaminopropionate ammonia-lyase from Salmonella typhimurium. Purification and characterization of the crystalline enzyme, and sequence determination of the pyridoxal 5'-phosphate binding peptide.</title>
        <authorList>
            <person name="Nagasawa T."/>
            <person name="Tanizawa K."/>
            <person name="Satoda T."/>
            <person name="Yamada H."/>
        </authorList>
    </citation>
    <scope>PROTEIN SEQUENCE OF 1-22; 67-88 AND 239-242</scope>
    <scope>FUNCTION</scope>
    <scope>CATALYTIC ACTIVITY</scope>
    <scope>COFACTOR</scope>
    <scope>BIOPHYSICOCHEMICAL PROPERTIES</scope>
    <scope>SUBSTRATES</scope>
    <scope>SUBUNIT</scope>
    <source>
        <strain>IFO 12529</strain>
    </source>
</reference>
<reference key="3">
    <citation type="journal article" date="2003" name="Biochem. Biophys. Res. Commun.">
        <title>Characterization of recombinant diaminopropionate ammonia-lyase from Escherichia coli and Salmonella typhimurium.</title>
        <authorList>
            <person name="Khan F."/>
            <person name="Jala V.R."/>
            <person name="Rao N.A."/>
            <person name="Savithri H.S."/>
        </authorList>
    </citation>
    <scope>FUNCTION</scope>
    <scope>COFACTOR</scope>
    <scope>SUBUNIT</scope>
    <source>
        <strain>IFO 12529</strain>
    </source>
</reference>
<reference key="4">
    <citation type="journal article" date="2012" name="J. Bacteriol.">
        <title>Functional analysis of the genes encoding diaminopropionate ammonia lyase in Escherichia coli and Salmonella enterica serovar Typhimurium.</title>
        <authorList>
            <person name="Kalyani J.N."/>
            <person name="Ramachandra N."/>
            <person name="Kachroo A.H."/>
            <person name="Mahadevan S."/>
            <person name="Savithri H.S."/>
        </authorList>
    </citation>
    <scope>FUNCTION</scope>
    <scope>INDUCTION</scope>
    <scope>DISRUPTION PHENOTYPE</scope>
    <source>
        <strain>LT2 / SGSC1412 / ATCC 700720</strain>
    </source>
</reference>